<gene>
    <name evidence="1" type="primary">zipA</name>
    <name type="ordered locus">HDEF_0768</name>
</gene>
<sequence length="277" mass="31508">MQDLRLMLLLFGVITIIVLFLHGVWARRKERSALFYDQKTKDQNQKEDDVLLQILDEEGVGEVKILKKAPPNVEKNAFDKAHHKKIPSQTKYQALKFDSSVACVTASSFAQISETETQLQKKSDDLSHQSKETHHPSIQKEQKVLVLHVAAHSSRNFSGETLLKSILNSHFQFGDMNIFHRYLTLTGERITLFSLANMVKPGFFDLKKMAHFSTPGISIFMTLPCYGHASENFKLMLQSAQKIADELGGLVLDDQRQMITPQKLEDYNALIRSTPHL</sequence>
<comment type="function">
    <text evidence="1">Essential cell division protein that stabilizes the FtsZ protofilaments by cross-linking them and that serves as a cytoplasmic membrane anchor for the Z ring. Also required for the recruitment to the septal ring of downstream cell division proteins.</text>
</comment>
<comment type="subunit">
    <text evidence="1">Interacts with FtsZ via their C-terminal domains.</text>
</comment>
<comment type="subcellular location">
    <subcellularLocation>
        <location evidence="1">Cell inner membrane</location>
        <topology evidence="1">Single-pass type I membrane protein</topology>
    </subcellularLocation>
    <text evidence="1">Localizes to the Z ring in an FtsZ-dependent manner.</text>
</comment>
<comment type="similarity">
    <text evidence="1">Belongs to the ZipA family.</text>
</comment>
<proteinExistence type="inferred from homology"/>
<name>ZIPA_HAMD5</name>
<feature type="chain" id="PRO_1000206609" description="Cell division protein ZipA">
    <location>
        <begin position="1"/>
        <end position="277"/>
    </location>
</feature>
<feature type="topological domain" description="Periplasmic" evidence="1">
    <location>
        <begin position="1"/>
        <end position="5"/>
    </location>
</feature>
<feature type="transmembrane region" description="Helical" evidence="1">
    <location>
        <begin position="6"/>
        <end position="26"/>
    </location>
</feature>
<feature type="topological domain" description="Cytoplasmic" evidence="1">
    <location>
        <begin position="27"/>
        <end position="277"/>
    </location>
</feature>
<feature type="region of interest" description="Disordered" evidence="2">
    <location>
        <begin position="120"/>
        <end position="139"/>
    </location>
</feature>
<dbReference type="EMBL" id="CP001277">
    <property type="protein sequence ID" value="ACQ67496.1"/>
    <property type="molecule type" value="Genomic_DNA"/>
</dbReference>
<dbReference type="RefSeq" id="WP_015873316.1">
    <property type="nucleotide sequence ID" value="NC_012751.1"/>
</dbReference>
<dbReference type="SMR" id="C4K4K3"/>
<dbReference type="STRING" id="572265.HDEF_0768"/>
<dbReference type="GeneID" id="66260610"/>
<dbReference type="KEGG" id="hde:HDEF_0768"/>
<dbReference type="eggNOG" id="COG3115">
    <property type="taxonomic scope" value="Bacteria"/>
</dbReference>
<dbReference type="HOGENOM" id="CLU_030174_1_0_6"/>
<dbReference type="Proteomes" id="UP000002334">
    <property type="component" value="Chromosome"/>
</dbReference>
<dbReference type="GO" id="GO:0032153">
    <property type="term" value="C:cell division site"/>
    <property type="evidence" value="ECO:0007669"/>
    <property type="project" value="UniProtKB-UniRule"/>
</dbReference>
<dbReference type="GO" id="GO:0005886">
    <property type="term" value="C:plasma membrane"/>
    <property type="evidence" value="ECO:0007669"/>
    <property type="project" value="UniProtKB-SubCell"/>
</dbReference>
<dbReference type="GO" id="GO:0000917">
    <property type="term" value="P:division septum assembly"/>
    <property type="evidence" value="ECO:0007669"/>
    <property type="project" value="TreeGrafter"/>
</dbReference>
<dbReference type="GO" id="GO:0043093">
    <property type="term" value="P:FtsZ-dependent cytokinesis"/>
    <property type="evidence" value="ECO:0007669"/>
    <property type="project" value="UniProtKB-UniRule"/>
</dbReference>
<dbReference type="Gene3D" id="3.30.1400.10">
    <property type="entry name" value="ZipA, C-terminal FtsZ-binding domain"/>
    <property type="match status" value="1"/>
</dbReference>
<dbReference type="HAMAP" id="MF_00509">
    <property type="entry name" value="ZipA"/>
    <property type="match status" value="1"/>
</dbReference>
<dbReference type="InterPro" id="IPR011919">
    <property type="entry name" value="Cell_div_ZipA"/>
</dbReference>
<dbReference type="InterPro" id="IPR007449">
    <property type="entry name" value="ZipA_FtsZ-bd_C"/>
</dbReference>
<dbReference type="InterPro" id="IPR036765">
    <property type="entry name" value="ZipA_FtsZ-bd_C_sf"/>
</dbReference>
<dbReference type="NCBIfam" id="TIGR02205">
    <property type="entry name" value="septum_zipA"/>
    <property type="match status" value="1"/>
</dbReference>
<dbReference type="PANTHER" id="PTHR38685">
    <property type="entry name" value="CELL DIVISION PROTEIN ZIPA"/>
    <property type="match status" value="1"/>
</dbReference>
<dbReference type="PANTHER" id="PTHR38685:SF1">
    <property type="entry name" value="CELL DIVISION PROTEIN ZIPA"/>
    <property type="match status" value="1"/>
</dbReference>
<dbReference type="Pfam" id="PF04354">
    <property type="entry name" value="ZipA_C"/>
    <property type="match status" value="1"/>
</dbReference>
<dbReference type="SMART" id="SM00771">
    <property type="entry name" value="ZipA_C"/>
    <property type="match status" value="1"/>
</dbReference>
<dbReference type="SUPFAM" id="SSF64383">
    <property type="entry name" value="Cell-division protein ZipA, C-terminal domain"/>
    <property type="match status" value="1"/>
</dbReference>
<keyword id="KW-0131">Cell cycle</keyword>
<keyword id="KW-0132">Cell division</keyword>
<keyword id="KW-0997">Cell inner membrane</keyword>
<keyword id="KW-1003">Cell membrane</keyword>
<keyword id="KW-0472">Membrane</keyword>
<keyword id="KW-0812">Transmembrane</keyword>
<keyword id="KW-1133">Transmembrane helix</keyword>
<reference key="1">
    <citation type="journal article" date="2009" name="Proc. Natl. Acad. Sci. U.S.A.">
        <title>Hamiltonella defensa, genome evolution of protective bacterial endosymbiont from pathogenic ancestors.</title>
        <authorList>
            <person name="Degnan P.H."/>
            <person name="Yu Y."/>
            <person name="Sisneros N."/>
            <person name="Wing R.A."/>
            <person name="Moran N.A."/>
        </authorList>
    </citation>
    <scope>NUCLEOTIDE SEQUENCE [LARGE SCALE GENOMIC DNA]</scope>
    <source>
        <strain>5AT</strain>
    </source>
</reference>
<accession>C4K4K3</accession>
<evidence type="ECO:0000255" key="1">
    <source>
        <dbReference type="HAMAP-Rule" id="MF_00509"/>
    </source>
</evidence>
<evidence type="ECO:0000256" key="2">
    <source>
        <dbReference type="SAM" id="MobiDB-lite"/>
    </source>
</evidence>
<organism>
    <name type="scientific">Hamiltonella defensa subsp. Acyrthosiphon pisum (strain 5AT)</name>
    <dbReference type="NCBI Taxonomy" id="572265"/>
    <lineage>
        <taxon>Bacteria</taxon>
        <taxon>Pseudomonadati</taxon>
        <taxon>Pseudomonadota</taxon>
        <taxon>Gammaproteobacteria</taxon>
        <taxon>Enterobacterales</taxon>
        <taxon>Enterobacteriaceae</taxon>
        <taxon>aphid secondary symbionts</taxon>
        <taxon>Candidatus Hamiltonella</taxon>
    </lineage>
</organism>
<protein>
    <recommendedName>
        <fullName evidence="1">Cell division protein ZipA</fullName>
    </recommendedName>
</protein>